<organism>
    <name type="scientific">Burkholderia thailandensis (strain ATCC 700388 / DSM 13276 / CCUG 48851 / CIP 106301 / E264)</name>
    <dbReference type="NCBI Taxonomy" id="271848"/>
    <lineage>
        <taxon>Bacteria</taxon>
        <taxon>Pseudomonadati</taxon>
        <taxon>Pseudomonadota</taxon>
        <taxon>Betaproteobacteria</taxon>
        <taxon>Burkholderiales</taxon>
        <taxon>Burkholderiaceae</taxon>
        <taxon>Burkholderia</taxon>
        <taxon>pseudomallei group</taxon>
    </lineage>
</organism>
<name>METXS_BURTA</name>
<keyword id="KW-0012">Acyltransferase</keyword>
<keyword id="KW-0028">Amino-acid biosynthesis</keyword>
<keyword id="KW-0963">Cytoplasm</keyword>
<keyword id="KW-0486">Methionine biosynthesis</keyword>
<keyword id="KW-0808">Transferase</keyword>
<accession>Q2T284</accession>
<proteinExistence type="evidence at protein level"/>
<reference key="1">
    <citation type="journal article" date="2005" name="BMC Genomics">
        <title>Bacterial genome adaptation to niches: divergence of the potential virulence genes in three Burkholderia species of different survival strategies.</title>
        <authorList>
            <person name="Kim H.S."/>
            <person name="Schell M.A."/>
            <person name="Yu Y."/>
            <person name="Ulrich R.L."/>
            <person name="Sarria S.H."/>
            <person name="Nierman W.C."/>
            <person name="DeShazer D."/>
        </authorList>
    </citation>
    <scope>NUCLEOTIDE SEQUENCE [LARGE SCALE GENOMIC DNA]</scope>
    <source>
        <strain>ATCC 700388 / DSM 13276 / CCUG 48851 / CIP 106301 / E264</strain>
    </source>
</reference>
<reference key="2">
    <citation type="journal article" date="2017" name="Nat. Chem. Biol.">
        <title>Parallel evolution of non-homologous isofunctional enzymes in methionine biosynthesis.</title>
        <authorList>
            <person name="Bastard K."/>
            <person name="Perret A."/>
            <person name="Mariage A."/>
            <person name="Bessonnet T."/>
            <person name="Pinet-Turpault A."/>
            <person name="Petit J.L."/>
            <person name="Darii E."/>
            <person name="Bazire P."/>
            <person name="Vergne-Vaxelaire C."/>
            <person name="Brewee C."/>
            <person name="Debard A."/>
            <person name="Pellouin V."/>
            <person name="Besnard-Gonnet M."/>
            <person name="Artiguenave F."/>
            <person name="Medigue C."/>
            <person name="Vallenet D."/>
            <person name="Danchin A."/>
            <person name="Zaparucha A."/>
            <person name="Weissenbach J."/>
            <person name="Salanoubat M."/>
            <person name="de Berardinis V."/>
        </authorList>
    </citation>
    <scope>FUNCTION</scope>
    <scope>CATALYTIC ACTIVITY</scope>
</reference>
<dbReference type="EC" id="2.3.1.46" evidence="1 2"/>
<dbReference type="EMBL" id="CP000086">
    <property type="protein sequence ID" value="ABC37574.1"/>
    <property type="molecule type" value="Genomic_DNA"/>
</dbReference>
<dbReference type="SMR" id="Q2T284"/>
<dbReference type="ESTHER" id="burma-metx">
    <property type="family name" value="Homoserine_transacetylase"/>
</dbReference>
<dbReference type="GeneID" id="45119929"/>
<dbReference type="KEGG" id="bte:BTH_I0157"/>
<dbReference type="HOGENOM" id="CLU_028760_1_2_4"/>
<dbReference type="UniPathway" id="UPA00051">
    <property type="reaction ID" value="UER00075"/>
</dbReference>
<dbReference type="Proteomes" id="UP000001930">
    <property type="component" value="Chromosome I"/>
</dbReference>
<dbReference type="GO" id="GO:0005737">
    <property type="term" value="C:cytoplasm"/>
    <property type="evidence" value="ECO:0007669"/>
    <property type="project" value="UniProtKB-SubCell"/>
</dbReference>
<dbReference type="GO" id="GO:0004414">
    <property type="term" value="F:homoserine O-acetyltransferase activity"/>
    <property type="evidence" value="ECO:0007669"/>
    <property type="project" value="TreeGrafter"/>
</dbReference>
<dbReference type="GO" id="GO:0008899">
    <property type="term" value="F:homoserine O-succinyltransferase activity"/>
    <property type="evidence" value="ECO:0007669"/>
    <property type="project" value="UniProtKB-UniRule"/>
</dbReference>
<dbReference type="GO" id="GO:0009092">
    <property type="term" value="P:homoserine metabolic process"/>
    <property type="evidence" value="ECO:0007669"/>
    <property type="project" value="TreeGrafter"/>
</dbReference>
<dbReference type="GO" id="GO:0009086">
    <property type="term" value="P:methionine biosynthetic process"/>
    <property type="evidence" value="ECO:0007669"/>
    <property type="project" value="UniProtKB-UniRule"/>
</dbReference>
<dbReference type="FunFam" id="1.10.1740.110:FF:000001">
    <property type="entry name" value="Homoserine O-acetyltransferase"/>
    <property type="match status" value="1"/>
</dbReference>
<dbReference type="Gene3D" id="1.10.1740.110">
    <property type="match status" value="1"/>
</dbReference>
<dbReference type="Gene3D" id="3.40.50.1820">
    <property type="entry name" value="alpha/beta hydrolase"/>
    <property type="match status" value="1"/>
</dbReference>
<dbReference type="HAMAP" id="MF_00296">
    <property type="entry name" value="MetX_acyltransf"/>
    <property type="match status" value="1"/>
</dbReference>
<dbReference type="InterPro" id="IPR000073">
    <property type="entry name" value="AB_hydrolase_1"/>
</dbReference>
<dbReference type="InterPro" id="IPR029058">
    <property type="entry name" value="AB_hydrolase_fold"/>
</dbReference>
<dbReference type="InterPro" id="IPR008220">
    <property type="entry name" value="HAT_MetX-like"/>
</dbReference>
<dbReference type="NCBIfam" id="TIGR01392">
    <property type="entry name" value="homoserO_Ac_trn"/>
    <property type="match status" value="1"/>
</dbReference>
<dbReference type="NCBIfam" id="NF001209">
    <property type="entry name" value="PRK00175.1"/>
    <property type="match status" value="1"/>
</dbReference>
<dbReference type="PANTHER" id="PTHR32268">
    <property type="entry name" value="HOMOSERINE O-ACETYLTRANSFERASE"/>
    <property type="match status" value="1"/>
</dbReference>
<dbReference type="PANTHER" id="PTHR32268:SF11">
    <property type="entry name" value="HOMOSERINE O-ACETYLTRANSFERASE"/>
    <property type="match status" value="1"/>
</dbReference>
<dbReference type="Pfam" id="PF00561">
    <property type="entry name" value="Abhydrolase_1"/>
    <property type="match status" value="1"/>
</dbReference>
<dbReference type="PIRSF" id="PIRSF000443">
    <property type="entry name" value="Homoser_Ac_trans"/>
    <property type="match status" value="1"/>
</dbReference>
<dbReference type="SUPFAM" id="SSF53474">
    <property type="entry name" value="alpha/beta-Hydrolases"/>
    <property type="match status" value="1"/>
</dbReference>
<comment type="function">
    <text evidence="1 2">Transfers a succinyl group from succinyl-CoA to L-homoserine, forming succinyl-L-homoserine.</text>
</comment>
<comment type="catalytic activity">
    <reaction evidence="1 2">
        <text>L-homoserine + succinyl-CoA = O-succinyl-L-homoserine + CoA</text>
        <dbReference type="Rhea" id="RHEA:22008"/>
        <dbReference type="ChEBI" id="CHEBI:57287"/>
        <dbReference type="ChEBI" id="CHEBI:57292"/>
        <dbReference type="ChEBI" id="CHEBI:57476"/>
        <dbReference type="ChEBI" id="CHEBI:57661"/>
        <dbReference type="EC" id="2.3.1.46"/>
    </reaction>
</comment>
<comment type="pathway">
    <text evidence="1">Amino-acid biosynthesis; L-methionine biosynthesis via de novo pathway; O-succinyl-L-homoserine from L-homoserine: step 1/1.</text>
</comment>
<comment type="subunit">
    <text evidence="1">Homodimer.</text>
</comment>
<comment type="subcellular location">
    <subcellularLocation>
        <location evidence="1">Cytoplasm</location>
    </subcellularLocation>
</comment>
<comment type="similarity">
    <text evidence="1">Belongs to the AB hydrolase superfamily. MetX family.</text>
</comment>
<protein>
    <recommendedName>
        <fullName evidence="1">Homoserine O-succinyltransferase</fullName>
        <shortName evidence="1 3">HST</shortName>
        <ecNumber evidence="1 2">2.3.1.46</ecNumber>
    </recommendedName>
    <alternativeName>
        <fullName evidence="1">Homoserine transsuccinylase</fullName>
        <shortName evidence="1">HTS</shortName>
    </alternativeName>
</protein>
<sequence>MESIGVVAPHTMHFAEPLRLQSGSVLGNYQLVVETYGELNAARSNAVLVCHALNASHHVAGVYADDPRSTGWWDNMVGPGKPLDTNRFFVIGVNNLGSCFGSTGPMSIDPATGTPYGARFPVVTVEDWVHAQARVADAFGIERFAAVMGGSLGGMQALAWSLLYPERVAHCIDIASTPKLSAQNIAFNEVARSAILSDPDFHGGDYYAHGVKPRRGLRVARMIGHITYLSDDDMAEKFGRALRRADGALDAYNFNFDVEFEVESYLRYQGDKFADYFDANTYLLITRALDYFDPAKAFNGNLSAALAHTKAKYLVASFTTDWRFAPARSREIVKALLDNRRSVSYAEIDAPHGHDAFLLDDARYHNLVRAYYERIAEEVGA</sequence>
<feature type="chain" id="PRO_1000021875" description="Homoserine O-succinyltransferase">
    <location>
        <begin position="1"/>
        <end position="381"/>
    </location>
</feature>
<feature type="domain" description="AB hydrolase-1" evidence="1">
    <location>
        <begin position="45"/>
        <end position="360"/>
    </location>
</feature>
<feature type="active site" description="Nucleophile" evidence="1">
    <location>
        <position position="151"/>
    </location>
</feature>
<feature type="active site" evidence="1">
    <location>
        <position position="321"/>
    </location>
</feature>
<feature type="active site" evidence="1">
    <location>
        <position position="354"/>
    </location>
</feature>
<feature type="binding site" evidence="1">
    <location>
        <position position="221"/>
    </location>
    <ligand>
        <name>substrate</name>
    </ligand>
</feature>
<feature type="binding site" evidence="1">
    <location>
        <position position="355"/>
    </location>
    <ligand>
        <name>substrate</name>
    </ligand>
</feature>
<feature type="site" description="Important for acyl-CoA specificity" evidence="1 4">
    <location>
        <position position="323"/>
    </location>
</feature>
<gene>
    <name evidence="1 3" type="primary">metXS</name>
    <name type="ordered locus">BTH_I0157</name>
</gene>
<evidence type="ECO:0000255" key="1">
    <source>
        <dbReference type="HAMAP-Rule" id="MF_00296"/>
    </source>
</evidence>
<evidence type="ECO:0000269" key="2">
    <source>
    </source>
</evidence>
<evidence type="ECO:0000303" key="3">
    <source>
    </source>
</evidence>
<evidence type="ECO:0000305" key="4">
    <source>
    </source>
</evidence>